<keyword id="KW-0963">Cytoplasm</keyword>
<keyword id="KW-0489">Methyltransferase</keyword>
<keyword id="KW-1185">Reference proteome</keyword>
<keyword id="KW-0694">RNA-binding</keyword>
<keyword id="KW-0698">rRNA processing</keyword>
<keyword id="KW-0949">S-adenosyl-L-methionine</keyword>
<keyword id="KW-0808">Transferase</keyword>
<proteinExistence type="inferred from homology"/>
<feature type="chain" id="PRO_0000257278" description="Ribosomal RNA small subunit methyltransferase A">
    <location>
        <begin position="1"/>
        <end position="316"/>
    </location>
</feature>
<feature type="binding site" evidence="1">
    <location>
        <position position="33"/>
    </location>
    <ligand>
        <name>S-adenosyl-L-methionine</name>
        <dbReference type="ChEBI" id="CHEBI:59789"/>
    </ligand>
</feature>
<feature type="binding site" evidence="1">
    <location>
        <position position="35"/>
    </location>
    <ligand>
        <name>S-adenosyl-L-methionine</name>
        <dbReference type="ChEBI" id="CHEBI:59789"/>
    </ligand>
</feature>
<feature type="binding site" evidence="1">
    <location>
        <position position="60"/>
    </location>
    <ligand>
        <name>S-adenosyl-L-methionine</name>
        <dbReference type="ChEBI" id="CHEBI:59789"/>
    </ligand>
</feature>
<feature type="binding site" evidence="1">
    <location>
        <position position="81"/>
    </location>
    <ligand>
        <name>S-adenosyl-L-methionine</name>
        <dbReference type="ChEBI" id="CHEBI:59789"/>
    </ligand>
</feature>
<feature type="binding site" evidence="1">
    <location>
        <position position="110"/>
    </location>
    <ligand>
        <name>S-adenosyl-L-methionine</name>
        <dbReference type="ChEBI" id="CHEBI:59789"/>
    </ligand>
</feature>
<feature type="binding site" evidence="1">
    <location>
        <position position="133"/>
    </location>
    <ligand>
        <name>S-adenosyl-L-methionine</name>
        <dbReference type="ChEBI" id="CHEBI:59789"/>
    </ligand>
</feature>
<reference key="1">
    <citation type="journal article" date="2005" name="J. Bacteriol.">
        <title>Complete genome sequence and analysis of the multiresistant nosocomial pathogen Corynebacterium jeikeium K411, a lipid-requiring bacterium of the human skin flora.</title>
        <authorList>
            <person name="Tauch A."/>
            <person name="Kaiser O."/>
            <person name="Hain T."/>
            <person name="Goesmann A."/>
            <person name="Weisshaar B."/>
            <person name="Albersmeier A."/>
            <person name="Bekel T."/>
            <person name="Bischoff N."/>
            <person name="Brune I."/>
            <person name="Chakraborty T."/>
            <person name="Kalinowski J."/>
            <person name="Meyer F."/>
            <person name="Rupp O."/>
            <person name="Schneiker S."/>
            <person name="Viehoever P."/>
            <person name="Puehler A."/>
        </authorList>
    </citation>
    <scope>NUCLEOTIDE SEQUENCE [LARGE SCALE GENOMIC DNA]</scope>
    <source>
        <strain>K411</strain>
    </source>
</reference>
<accession>Q4JU23</accession>
<gene>
    <name evidence="1" type="primary">rsmA</name>
    <name evidence="1" type="synonym">ksgA</name>
    <name type="ordered locus">jk1511</name>
</gene>
<protein>
    <recommendedName>
        <fullName evidence="1">Ribosomal RNA small subunit methyltransferase A</fullName>
        <ecNumber evidence="1">2.1.1.182</ecNumber>
    </recommendedName>
    <alternativeName>
        <fullName evidence="1">16S rRNA (adenine(1518)-N(6)/adenine(1519)-N(6))-dimethyltransferase</fullName>
    </alternativeName>
    <alternativeName>
        <fullName evidence="1">16S rRNA dimethyladenosine transferase</fullName>
    </alternativeName>
    <alternativeName>
        <fullName evidence="1">16S rRNA dimethylase</fullName>
    </alternativeName>
    <alternativeName>
        <fullName evidence="1">S-adenosylmethionine-6-N', N'-adenosyl(rRNA) dimethyltransferase</fullName>
    </alternativeName>
</protein>
<evidence type="ECO:0000255" key="1">
    <source>
        <dbReference type="HAMAP-Rule" id="MF_00607"/>
    </source>
</evidence>
<name>RSMA_CORJK</name>
<dbReference type="EC" id="2.1.1.182" evidence="1"/>
<dbReference type="EMBL" id="CR931997">
    <property type="protein sequence ID" value="CAI37684.1"/>
    <property type="molecule type" value="Genomic_DNA"/>
</dbReference>
<dbReference type="RefSeq" id="WP_011273934.1">
    <property type="nucleotide sequence ID" value="NC_007164.1"/>
</dbReference>
<dbReference type="SMR" id="Q4JU23"/>
<dbReference type="STRING" id="306537.jk1511"/>
<dbReference type="KEGG" id="cjk:jk1511"/>
<dbReference type="PATRIC" id="fig|306537.10.peg.1531"/>
<dbReference type="eggNOG" id="COG0030">
    <property type="taxonomic scope" value="Bacteria"/>
</dbReference>
<dbReference type="HOGENOM" id="CLU_041220_1_1_11"/>
<dbReference type="OrthoDB" id="9814755at2"/>
<dbReference type="Proteomes" id="UP000000545">
    <property type="component" value="Chromosome"/>
</dbReference>
<dbReference type="GO" id="GO:0005829">
    <property type="term" value="C:cytosol"/>
    <property type="evidence" value="ECO:0007669"/>
    <property type="project" value="TreeGrafter"/>
</dbReference>
<dbReference type="GO" id="GO:0052908">
    <property type="term" value="F:16S rRNA (adenine(1518)-N(6)/adenine(1519)-N(6))-dimethyltransferase activity"/>
    <property type="evidence" value="ECO:0007669"/>
    <property type="project" value="UniProtKB-EC"/>
</dbReference>
<dbReference type="GO" id="GO:0003723">
    <property type="term" value="F:RNA binding"/>
    <property type="evidence" value="ECO:0007669"/>
    <property type="project" value="UniProtKB-KW"/>
</dbReference>
<dbReference type="CDD" id="cd02440">
    <property type="entry name" value="AdoMet_MTases"/>
    <property type="match status" value="1"/>
</dbReference>
<dbReference type="FunFam" id="3.40.50.150:FF:000023">
    <property type="entry name" value="Ribosomal RNA small subunit methyltransferase A"/>
    <property type="match status" value="1"/>
</dbReference>
<dbReference type="Gene3D" id="1.10.8.100">
    <property type="entry name" value="Ribosomal RNA adenine dimethylase-like, domain 2"/>
    <property type="match status" value="1"/>
</dbReference>
<dbReference type="Gene3D" id="3.40.50.150">
    <property type="entry name" value="Vaccinia Virus protein VP39"/>
    <property type="match status" value="1"/>
</dbReference>
<dbReference type="HAMAP" id="MF_00607">
    <property type="entry name" value="16SrRNA_methyltr_A"/>
    <property type="match status" value="1"/>
</dbReference>
<dbReference type="InterPro" id="IPR001737">
    <property type="entry name" value="KsgA/Erm"/>
</dbReference>
<dbReference type="InterPro" id="IPR023165">
    <property type="entry name" value="rRNA_Ade_diMease-like_C"/>
</dbReference>
<dbReference type="InterPro" id="IPR020596">
    <property type="entry name" value="rRNA_Ade_Mease_Trfase_CS"/>
</dbReference>
<dbReference type="InterPro" id="IPR020598">
    <property type="entry name" value="rRNA_Ade_methylase_Trfase_N"/>
</dbReference>
<dbReference type="InterPro" id="IPR011530">
    <property type="entry name" value="rRNA_adenine_dimethylase"/>
</dbReference>
<dbReference type="InterPro" id="IPR029063">
    <property type="entry name" value="SAM-dependent_MTases_sf"/>
</dbReference>
<dbReference type="NCBIfam" id="TIGR00755">
    <property type="entry name" value="ksgA"/>
    <property type="match status" value="1"/>
</dbReference>
<dbReference type="PANTHER" id="PTHR11727">
    <property type="entry name" value="DIMETHYLADENOSINE TRANSFERASE"/>
    <property type="match status" value="1"/>
</dbReference>
<dbReference type="PANTHER" id="PTHR11727:SF7">
    <property type="entry name" value="DIMETHYLADENOSINE TRANSFERASE-RELATED"/>
    <property type="match status" value="1"/>
</dbReference>
<dbReference type="Pfam" id="PF00398">
    <property type="entry name" value="RrnaAD"/>
    <property type="match status" value="1"/>
</dbReference>
<dbReference type="SMART" id="SM00650">
    <property type="entry name" value="rADc"/>
    <property type="match status" value="1"/>
</dbReference>
<dbReference type="SUPFAM" id="SSF53335">
    <property type="entry name" value="S-adenosyl-L-methionine-dependent methyltransferases"/>
    <property type="match status" value="1"/>
</dbReference>
<dbReference type="PROSITE" id="PS01131">
    <property type="entry name" value="RRNA_A_DIMETH"/>
    <property type="match status" value="1"/>
</dbReference>
<dbReference type="PROSITE" id="PS51689">
    <property type="entry name" value="SAM_RNA_A_N6_MT"/>
    <property type="match status" value="1"/>
</dbReference>
<organism>
    <name type="scientific">Corynebacterium jeikeium (strain K411)</name>
    <dbReference type="NCBI Taxonomy" id="306537"/>
    <lineage>
        <taxon>Bacteria</taxon>
        <taxon>Bacillati</taxon>
        <taxon>Actinomycetota</taxon>
        <taxon>Actinomycetes</taxon>
        <taxon>Mycobacteriales</taxon>
        <taxon>Corynebacteriaceae</taxon>
        <taxon>Corynebacterium</taxon>
    </lineage>
</organism>
<comment type="function">
    <text evidence="1">Specifically dimethylates two adjacent adenosines (A1518 and A1519) in the loop of a conserved hairpin near the 3'-end of 16S rRNA in the 30S particle. May play a critical role in biogenesis of 30S subunits.</text>
</comment>
<comment type="catalytic activity">
    <reaction evidence="1">
        <text>adenosine(1518)/adenosine(1519) in 16S rRNA + 4 S-adenosyl-L-methionine = N(6)-dimethyladenosine(1518)/N(6)-dimethyladenosine(1519) in 16S rRNA + 4 S-adenosyl-L-homocysteine + 4 H(+)</text>
        <dbReference type="Rhea" id="RHEA:19609"/>
        <dbReference type="Rhea" id="RHEA-COMP:10232"/>
        <dbReference type="Rhea" id="RHEA-COMP:10233"/>
        <dbReference type="ChEBI" id="CHEBI:15378"/>
        <dbReference type="ChEBI" id="CHEBI:57856"/>
        <dbReference type="ChEBI" id="CHEBI:59789"/>
        <dbReference type="ChEBI" id="CHEBI:74411"/>
        <dbReference type="ChEBI" id="CHEBI:74493"/>
        <dbReference type="EC" id="2.1.1.182"/>
    </reaction>
</comment>
<comment type="subcellular location">
    <subcellularLocation>
        <location evidence="1">Cytoplasm</location>
    </subcellularLocation>
</comment>
<comment type="similarity">
    <text evidence="1">Belongs to the class I-like SAM-binding methyltransferase superfamily. rRNA adenine N(6)-methyltransferase family. RsmA subfamily.</text>
</comment>
<sequence length="316" mass="33762">MVNERKIRLLGPNEIRQLAEELDLNPTKKLGQNFVHDPNTVRKIVKAADVTADDNVVEIGPGLGSLTLALLEAGASVTAVEIDPRLAAKLPATLEEQGAAEADVAVILKDAMEVAVQDFADAGRPLPTALVANLPYNVSVPVLLHMLEEFPSIDRVLVMVQLEVADRLAAAPGSKIYGVPSVKAGFYGSVARAATIGKNVFWPAPKIDSGLVRIDRYAEGAEPWAGGQSGAEQFDADQGIEQLDAQKLRREVFDLADAAFLQRRKTLRAALSGHFGSGQAAEEALRSAGIDPTLRGEKLSTEQFVQLAATSLRSVR</sequence>